<accession>B7NEL0</accession>
<gene>
    <name evidence="1" type="primary">glyS</name>
    <name type="ordered locus">ECUMN_4069</name>
</gene>
<organism>
    <name type="scientific">Escherichia coli O17:K52:H18 (strain UMN026 / ExPEC)</name>
    <dbReference type="NCBI Taxonomy" id="585056"/>
    <lineage>
        <taxon>Bacteria</taxon>
        <taxon>Pseudomonadati</taxon>
        <taxon>Pseudomonadota</taxon>
        <taxon>Gammaproteobacteria</taxon>
        <taxon>Enterobacterales</taxon>
        <taxon>Enterobacteriaceae</taxon>
        <taxon>Escherichia</taxon>
    </lineage>
</organism>
<name>SYGB_ECOLU</name>
<comment type="catalytic activity">
    <reaction evidence="1">
        <text>tRNA(Gly) + glycine + ATP = glycyl-tRNA(Gly) + AMP + diphosphate</text>
        <dbReference type="Rhea" id="RHEA:16013"/>
        <dbReference type="Rhea" id="RHEA-COMP:9664"/>
        <dbReference type="Rhea" id="RHEA-COMP:9683"/>
        <dbReference type="ChEBI" id="CHEBI:30616"/>
        <dbReference type="ChEBI" id="CHEBI:33019"/>
        <dbReference type="ChEBI" id="CHEBI:57305"/>
        <dbReference type="ChEBI" id="CHEBI:78442"/>
        <dbReference type="ChEBI" id="CHEBI:78522"/>
        <dbReference type="ChEBI" id="CHEBI:456215"/>
        <dbReference type="EC" id="6.1.1.14"/>
    </reaction>
</comment>
<comment type="subunit">
    <text evidence="1">Tetramer of two alpha and two beta subunits.</text>
</comment>
<comment type="subcellular location">
    <subcellularLocation>
        <location evidence="1">Cytoplasm</location>
    </subcellularLocation>
</comment>
<comment type="similarity">
    <text evidence="1">Belongs to the class-II aminoacyl-tRNA synthetase family.</text>
</comment>
<keyword id="KW-0030">Aminoacyl-tRNA synthetase</keyword>
<keyword id="KW-0067">ATP-binding</keyword>
<keyword id="KW-0963">Cytoplasm</keyword>
<keyword id="KW-0436">Ligase</keyword>
<keyword id="KW-0547">Nucleotide-binding</keyword>
<keyword id="KW-0648">Protein biosynthesis</keyword>
<evidence type="ECO:0000255" key="1">
    <source>
        <dbReference type="HAMAP-Rule" id="MF_00255"/>
    </source>
</evidence>
<dbReference type="EC" id="6.1.1.14" evidence="1"/>
<dbReference type="EMBL" id="CU928163">
    <property type="protein sequence ID" value="CAR15211.1"/>
    <property type="molecule type" value="Genomic_DNA"/>
</dbReference>
<dbReference type="RefSeq" id="WP_001291786.1">
    <property type="nucleotide sequence ID" value="NC_011751.1"/>
</dbReference>
<dbReference type="RefSeq" id="YP_002414711.1">
    <property type="nucleotide sequence ID" value="NC_011751.1"/>
</dbReference>
<dbReference type="SMR" id="B7NEL0"/>
<dbReference type="STRING" id="585056.ECUMN_4069"/>
<dbReference type="GeneID" id="75059834"/>
<dbReference type="KEGG" id="eum:ECUMN_4069"/>
<dbReference type="PATRIC" id="fig|585056.7.peg.4244"/>
<dbReference type="HOGENOM" id="CLU_007220_2_2_6"/>
<dbReference type="Proteomes" id="UP000007097">
    <property type="component" value="Chromosome"/>
</dbReference>
<dbReference type="GO" id="GO:0005829">
    <property type="term" value="C:cytosol"/>
    <property type="evidence" value="ECO:0007669"/>
    <property type="project" value="TreeGrafter"/>
</dbReference>
<dbReference type="GO" id="GO:0004814">
    <property type="term" value="F:arginine-tRNA ligase activity"/>
    <property type="evidence" value="ECO:0007669"/>
    <property type="project" value="InterPro"/>
</dbReference>
<dbReference type="GO" id="GO:0005524">
    <property type="term" value="F:ATP binding"/>
    <property type="evidence" value="ECO:0007669"/>
    <property type="project" value="UniProtKB-UniRule"/>
</dbReference>
<dbReference type="GO" id="GO:0004820">
    <property type="term" value="F:glycine-tRNA ligase activity"/>
    <property type="evidence" value="ECO:0007669"/>
    <property type="project" value="UniProtKB-UniRule"/>
</dbReference>
<dbReference type="GO" id="GO:0006420">
    <property type="term" value="P:arginyl-tRNA aminoacylation"/>
    <property type="evidence" value="ECO:0007669"/>
    <property type="project" value="InterPro"/>
</dbReference>
<dbReference type="GO" id="GO:0006426">
    <property type="term" value="P:glycyl-tRNA aminoacylation"/>
    <property type="evidence" value="ECO:0007669"/>
    <property type="project" value="UniProtKB-UniRule"/>
</dbReference>
<dbReference type="HAMAP" id="MF_00255">
    <property type="entry name" value="Gly_tRNA_synth_beta"/>
    <property type="match status" value="1"/>
</dbReference>
<dbReference type="InterPro" id="IPR008909">
    <property type="entry name" value="DALR_anticod-bd"/>
</dbReference>
<dbReference type="InterPro" id="IPR015944">
    <property type="entry name" value="Gly-tRNA-synth_bsu"/>
</dbReference>
<dbReference type="InterPro" id="IPR006194">
    <property type="entry name" value="Gly-tRNA-synth_heterodimer"/>
</dbReference>
<dbReference type="NCBIfam" id="TIGR00211">
    <property type="entry name" value="glyS"/>
    <property type="match status" value="1"/>
</dbReference>
<dbReference type="PANTHER" id="PTHR30075:SF2">
    <property type="entry name" value="GLYCINE--TRNA LIGASE, CHLOROPLASTIC_MITOCHONDRIAL 2"/>
    <property type="match status" value="1"/>
</dbReference>
<dbReference type="PANTHER" id="PTHR30075">
    <property type="entry name" value="GLYCYL-TRNA SYNTHETASE"/>
    <property type="match status" value="1"/>
</dbReference>
<dbReference type="Pfam" id="PF05746">
    <property type="entry name" value="DALR_1"/>
    <property type="match status" value="1"/>
</dbReference>
<dbReference type="Pfam" id="PF02092">
    <property type="entry name" value="tRNA_synt_2f"/>
    <property type="match status" value="1"/>
</dbReference>
<dbReference type="PRINTS" id="PR01045">
    <property type="entry name" value="TRNASYNTHGB"/>
</dbReference>
<dbReference type="SUPFAM" id="SSF109604">
    <property type="entry name" value="HD-domain/PDEase-like"/>
    <property type="match status" value="1"/>
</dbReference>
<dbReference type="PROSITE" id="PS50861">
    <property type="entry name" value="AA_TRNA_LIGASE_II_GLYAB"/>
    <property type="match status" value="1"/>
</dbReference>
<feature type="chain" id="PRO_1000197191" description="Glycine--tRNA ligase beta subunit">
    <location>
        <begin position="1"/>
        <end position="689"/>
    </location>
</feature>
<sequence length="689" mass="76799">MSEKTFLVEIGTEELPPKALRSLAESFAANFTAELDNAGLAHGTVQWFAAPRRLALKVANLAEAQPDREIEKRGPAIAQAFDAEGKPSKAAEGWARGCGITVDQAERLTTDKGEWLLYRAHVKGESTEALLPNMVATSLAKLPIPKLMRWGASDVHFVRPVHTVTLLLGDKVIPATILGIQSDRVIRGHRFMGEPEFTIDNADQYPEILRERGKVIADYEERKAKIKADAEEAARKIGGNADLSESLLEEVASLVEWPVVLTAKFEEKFLAVPSEALVYTMKGDQKYFPVYANDGKLLPNFIFVANIESKDPQQIISGNEKVVRPRLADAEFFFNTDRKKRLEDNLPRLQTVLFQQQLGTLRDKTDRIQALAGWIAEQIGADVNHATRAGLLSKCDLMTNMVFEFTDTQGVMGMHYARHDGEAEDVAVALNEQYQPRFAGDDLPSNPVACALAIADKMDTLAGIFGIGQHPKGDKDPFALRRAALGVLRIIVEKNLNLDLQTLTEEAVRLYGDKLTNANVVDDVIDFMLGRFRAWYQDEGYTVDTIQAVLARRPTRPADFDARMKAVSHFRTLDAAAALAAANKRVSNILAKSDEVLSDRVNASTLKEPEEIKLAMQVVVLRDKLEPYFAEGRYQDALVELAELREPVDAFFDKVMVMVDDKELRINRLTMLEKLRELFLRVADISLLQ</sequence>
<reference key="1">
    <citation type="journal article" date="2009" name="PLoS Genet.">
        <title>Organised genome dynamics in the Escherichia coli species results in highly diverse adaptive paths.</title>
        <authorList>
            <person name="Touchon M."/>
            <person name="Hoede C."/>
            <person name="Tenaillon O."/>
            <person name="Barbe V."/>
            <person name="Baeriswyl S."/>
            <person name="Bidet P."/>
            <person name="Bingen E."/>
            <person name="Bonacorsi S."/>
            <person name="Bouchier C."/>
            <person name="Bouvet O."/>
            <person name="Calteau A."/>
            <person name="Chiapello H."/>
            <person name="Clermont O."/>
            <person name="Cruveiller S."/>
            <person name="Danchin A."/>
            <person name="Diard M."/>
            <person name="Dossat C."/>
            <person name="Karoui M.E."/>
            <person name="Frapy E."/>
            <person name="Garry L."/>
            <person name="Ghigo J.M."/>
            <person name="Gilles A.M."/>
            <person name="Johnson J."/>
            <person name="Le Bouguenec C."/>
            <person name="Lescat M."/>
            <person name="Mangenot S."/>
            <person name="Martinez-Jehanne V."/>
            <person name="Matic I."/>
            <person name="Nassif X."/>
            <person name="Oztas S."/>
            <person name="Petit M.A."/>
            <person name="Pichon C."/>
            <person name="Rouy Z."/>
            <person name="Ruf C.S."/>
            <person name="Schneider D."/>
            <person name="Tourret J."/>
            <person name="Vacherie B."/>
            <person name="Vallenet D."/>
            <person name="Medigue C."/>
            <person name="Rocha E.P.C."/>
            <person name="Denamur E."/>
        </authorList>
    </citation>
    <scope>NUCLEOTIDE SEQUENCE [LARGE SCALE GENOMIC DNA]</scope>
    <source>
        <strain>UMN026 / ExPEC</strain>
    </source>
</reference>
<proteinExistence type="inferred from homology"/>
<protein>
    <recommendedName>
        <fullName evidence="1">Glycine--tRNA ligase beta subunit</fullName>
        <ecNumber evidence="1">6.1.1.14</ecNumber>
    </recommendedName>
    <alternativeName>
        <fullName evidence="1">Glycyl-tRNA synthetase beta subunit</fullName>
        <shortName evidence="1">GlyRS</shortName>
    </alternativeName>
</protein>